<sequence>MKLTPREKDKLLIFTAALLAERRRARGLKLNYPEAIAFITAALMEAARDGKTVAEVMHYGTTLLTRDDVMEGVPEMIPDIQVEATFPDGTKLVTVHHPIP</sequence>
<dbReference type="EC" id="3.5.1.5" evidence="1"/>
<dbReference type="EMBL" id="CP000270">
    <property type="protein sequence ID" value="ABE29297.1"/>
    <property type="molecule type" value="Genomic_DNA"/>
</dbReference>
<dbReference type="RefSeq" id="WP_011487082.1">
    <property type="nucleotide sequence ID" value="NZ_CP008760.1"/>
</dbReference>
<dbReference type="SMR" id="Q144E2"/>
<dbReference type="STRING" id="266265.Bxe_A3692"/>
<dbReference type="GeneID" id="97306198"/>
<dbReference type="KEGG" id="bxb:DR64_1384"/>
<dbReference type="KEGG" id="bxe:Bxe_A3692"/>
<dbReference type="PATRIC" id="fig|266265.5.peg.779"/>
<dbReference type="eggNOG" id="COG0831">
    <property type="taxonomic scope" value="Bacteria"/>
</dbReference>
<dbReference type="OrthoDB" id="9797217at2"/>
<dbReference type="UniPathway" id="UPA00258">
    <property type="reaction ID" value="UER00370"/>
</dbReference>
<dbReference type="Proteomes" id="UP000001817">
    <property type="component" value="Chromosome 1"/>
</dbReference>
<dbReference type="GO" id="GO:0005737">
    <property type="term" value="C:cytoplasm"/>
    <property type="evidence" value="ECO:0007669"/>
    <property type="project" value="UniProtKB-SubCell"/>
</dbReference>
<dbReference type="GO" id="GO:0016151">
    <property type="term" value="F:nickel cation binding"/>
    <property type="evidence" value="ECO:0007669"/>
    <property type="project" value="InterPro"/>
</dbReference>
<dbReference type="GO" id="GO:0009039">
    <property type="term" value="F:urease activity"/>
    <property type="evidence" value="ECO:0007669"/>
    <property type="project" value="UniProtKB-UniRule"/>
</dbReference>
<dbReference type="GO" id="GO:0043419">
    <property type="term" value="P:urea catabolic process"/>
    <property type="evidence" value="ECO:0007669"/>
    <property type="project" value="UniProtKB-UniRule"/>
</dbReference>
<dbReference type="CDD" id="cd00390">
    <property type="entry name" value="Urease_gamma"/>
    <property type="match status" value="1"/>
</dbReference>
<dbReference type="Gene3D" id="3.30.280.10">
    <property type="entry name" value="Urease, gamma-like subunit"/>
    <property type="match status" value="1"/>
</dbReference>
<dbReference type="HAMAP" id="MF_00739">
    <property type="entry name" value="Urease_gamma"/>
    <property type="match status" value="1"/>
</dbReference>
<dbReference type="InterPro" id="IPR012010">
    <property type="entry name" value="Urease_gamma"/>
</dbReference>
<dbReference type="InterPro" id="IPR002026">
    <property type="entry name" value="Urease_gamma/gamma-beta_su"/>
</dbReference>
<dbReference type="InterPro" id="IPR036463">
    <property type="entry name" value="Urease_gamma_sf"/>
</dbReference>
<dbReference type="InterPro" id="IPR050069">
    <property type="entry name" value="Urease_subunit"/>
</dbReference>
<dbReference type="NCBIfam" id="NF009712">
    <property type="entry name" value="PRK13241.1"/>
    <property type="match status" value="1"/>
</dbReference>
<dbReference type="NCBIfam" id="TIGR00193">
    <property type="entry name" value="urease_gam"/>
    <property type="match status" value="1"/>
</dbReference>
<dbReference type="PANTHER" id="PTHR33569">
    <property type="entry name" value="UREASE"/>
    <property type="match status" value="1"/>
</dbReference>
<dbReference type="PANTHER" id="PTHR33569:SF1">
    <property type="entry name" value="UREASE"/>
    <property type="match status" value="1"/>
</dbReference>
<dbReference type="Pfam" id="PF00547">
    <property type="entry name" value="Urease_gamma"/>
    <property type="match status" value="1"/>
</dbReference>
<dbReference type="PIRSF" id="PIRSF001223">
    <property type="entry name" value="Urease_gamma"/>
    <property type="match status" value="1"/>
</dbReference>
<dbReference type="SUPFAM" id="SSF54111">
    <property type="entry name" value="Urease, gamma-subunit"/>
    <property type="match status" value="1"/>
</dbReference>
<gene>
    <name evidence="1" type="primary">ureA</name>
    <name type="ordered locus">Bxeno_A0759</name>
    <name type="ORF">Bxe_A3692</name>
</gene>
<organism>
    <name type="scientific">Paraburkholderia xenovorans (strain LB400)</name>
    <dbReference type="NCBI Taxonomy" id="266265"/>
    <lineage>
        <taxon>Bacteria</taxon>
        <taxon>Pseudomonadati</taxon>
        <taxon>Pseudomonadota</taxon>
        <taxon>Betaproteobacteria</taxon>
        <taxon>Burkholderiales</taxon>
        <taxon>Burkholderiaceae</taxon>
        <taxon>Paraburkholderia</taxon>
    </lineage>
</organism>
<name>URE3_PARXL</name>
<keyword id="KW-0963">Cytoplasm</keyword>
<keyword id="KW-0378">Hydrolase</keyword>
<keyword id="KW-1185">Reference proteome</keyword>
<feature type="chain" id="PRO_1000046321" description="Urease subunit gamma">
    <location>
        <begin position="1"/>
        <end position="100"/>
    </location>
</feature>
<protein>
    <recommendedName>
        <fullName evidence="1">Urease subunit gamma</fullName>
        <ecNumber evidence="1">3.5.1.5</ecNumber>
    </recommendedName>
    <alternativeName>
        <fullName evidence="1">Urea amidohydrolase subunit gamma</fullName>
    </alternativeName>
</protein>
<accession>Q144E2</accession>
<proteinExistence type="inferred from homology"/>
<comment type="catalytic activity">
    <reaction evidence="1">
        <text>urea + 2 H2O + H(+) = hydrogencarbonate + 2 NH4(+)</text>
        <dbReference type="Rhea" id="RHEA:20557"/>
        <dbReference type="ChEBI" id="CHEBI:15377"/>
        <dbReference type="ChEBI" id="CHEBI:15378"/>
        <dbReference type="ChEBI" id="CHEBI:16199"/>
        <dbReference type="ChEBI" id="CHEBI:17544"/>
        <dbReference type="ChEBI" id="CHEBI:28938"/>
        <dbReference type="EC" id="3.5.1.5"/>
    </reaction>
</comment>
<comment type="pathway">
    <text evidence="1">Nitrogen metabolism; urea degradation; CO(2) and NH(3) from urea (urease route): step 1/1.</text>
</comment>
<comment type="subunit">
    <text evidence="1">Heterotrimer of UreA (gamma), UreB (beta) and UreC (alpha) subunits. Three heterotrimers associate to form the active enzyme.</text>
</comment>
<comment type="subcellular location">
    <subcellularLocation>
        <location evidence="1">Cytoplasm</location>
    </subcellularLocation>
</comment>
<comment type="similarity">
    <text evidence="1">Belongs to the urease gamma subunit family.</text>
</comment>
<evidence type="ECO:0000255" key="1">
    <source>
        <dbReference type="HAMAP-Rule" id="MF_00739"/>
    </source>
</evidence>
<reference key="1">
    <citation type="journal article" date="2006" name="Proc. Natl. Acad. Sci. U.S.A.">
        <title>Burkholderia xenovorans LB400 harbors a multi-replicon, 9.73-Mbp genome shaped for versatility.</title>
        <authorList>
            <person name="Chain P.S.G."/>
            <person name="Denef V.J."/>
            <person name="Konstantinidis K.T."/>
            <person name="Vergez L.M."/>
            <person name="Agullo L."/>
            <person name="Reyes V.L."/>
            <person name="Hauser L."/>
            <person name="Cordova M."/>
            <person name="Gomez L."/>
            <person name="Gonzalez M."/>
            <person name="Land M."/>
            <person name="Lao V."/>
            <person name="Larimer F."/>
            <person name="LiPuma J.J."/>
            <person name="Mahenthiralingam E."/>
            <person name="Malfatti S.A."/>
            <person name="Marx C.J."/>
            <person name="Parnell J.J."/>
            <person name="Ramette A."/>
            <person name="Richardson P."/>
            <person name="Seeger M."/>
            <person name="Smith D."/>
            <person name="Spilker T."/>
            <person name="Sul W.J."/>
            <person name="Tsoi T.V."/>
            <person name="Ulrich L.E."/>
            <person name="Zhulin I.B."/>
            <person name="Tiedje J.M."/>
        </authorList>
    </citation>
    <scope>NUCLEOTIDE SEQUENCE [LARGE SCALE GENOMIC DNA]</scope>
    <source>
        <strain>LB400</strain>
    </source>
</reference>